<accession>B5XYF6</accession>
<dbReference type="EMBL" id="CP000964">
    <property type="protein sequence ID" value="ACI07099.1"/>
    <property type="molecule type" value="Genomic_DNA"/>
</dbReference>
<dbReference type="SMR" id="B5XYF6"/>
<dbReference type="KEGG" id="kpe:KPK_5310"/>
<dbReference type="HOGENOM" id="CLU_086499_3_2_6"/>
<dbReference type="Proteomes" id="UP000001734">
    <property type="component" value="Chromosome"/>
</dbReference>
<dbReference type="GO" id="GO:0022625">
    <property type="term" value="C:cytosolic large ribosomal subunit"/>
    <property type="evidence" value="ECO:0007669"/>
    <property type="project" value="TreeGrafter"/>
</dbReference>
<dbReference type="GO" id="GO:0003729">
    <property type="term" value="F:mRNA binding"/>
    <property type="evidence" value="ECO:0007669"/>
    <property type="project" value="TreeGrafter"/>
</dbReference>
<dbReference type="GO" id="GO:0003735">
    <property type="term" value="F:structural constituent of ribosome"/>
    <property type="evidence" value="ECO:0007669"/>
    <property type="project" value="InterPro"/>
</dbReference>
<dbReference type="GO" id="GO:0006412">
    <property type="term" value="P:translation"/>
    <property type="evidence" value="ECO:0007669"/>
    <property type="project" value="UniProtKB-UniRule"/>
</dbReference>
<dbReference type="CDD" id="cd00387">
    <property type="entry name" value="Ribosomal_L7_L12"/>
    <property type="match status" value="1"/>
</dbReference>
<dbReference type="FunFam" id="1.20.5.710:FF:000001">
    <property type="entry name" value="50S ribosomal protein L7/L12"/>
    <property type="match status" value="1"/>
</dbReference>
<dbReference type="FunFam" id="3.30.1390.10:FF:000001">
    <property type="entry name" value="50S ribosomal protein L7/L12"/>
    <property type="match status" value="1"/>
</dbReference>
<dbReference type="Gene3D" id="3.30.1390.10">
    <property type="match status" value="1"/>
</dbReference>
<dbReference type="Gene3D" id="1.20.5.710">
    <property type="entry name" value="Single helix bin"/>
    <property type="match status" value="1"/>
</dbReference>
<dbReference type="HAMAP" id="MF_00368">
    <property type="entry name" value="Ribosomal_bL12"/>
    <property type="match status" value="1"/>
</dbReference>
<dbReference type="InterPro" id="IPR000206">
    <property type="entry name" value="Ribosomal_bL12"/>
</dbReference>
<dbReference type="InterPro" id="IPR013823">
    <property type="entry name" value="Ribosomal_bL12_C"/>
</dbReference>
<dbReference type="InterPro" id="IPR014719">
    <property type="entry name" value="Ribosomal_bL12_C/ClpS-like"/>
</dbReference>
<dbReference type="InterPro" id="IPR008932">
    <property type="entry name" value="Ribosomal_bL12_oligo"/>
</dbReference>
<dbReference type="InterPro" id="IPR036235">
    <property type="entry name" value="Ribosomal_bL12_oligo_N_sf"/>
</dbReference>
<dbReference type="NCBIfam" id="TIGR00855">
    <property type="entry name" value="L12"/>
    <property type="match status" value="1"/>
</dbReference>
<dbReference type="PANTHER" id="PTHR45987">
    <property type="entry name" value="39S RIBOSOMAL PROTEIN L12"/>
    <property type="match status" value="1"/>
</dbReference>
<dbReference type="PANTHER" id="PTHR45987:SF4">
    <property type="entry name" value="LARGE RIBOSOMAL SUBUNIT PROTEIN BL12M"/>
    <property type="match status" value="1"/>
</dbReference>
<dbReference type="Pfam" id="PF00542">
    <property type="entry name" value="Ribosomal_L12"/>
    <property type="match status" value="1"/>
</dbReference>
<dbReference type="Pfam" id="PF16320">
    <property type="entry name" value="Ribosomal_L12_N"/>
    <property type="match status" value="1"/>
</dbReference>
<dbReference type="SUPFAM" id="SSF54736">
    <property type="entry name" value="ClpS-like"/>
    <property type="match status" value="1"/>
</dbReference>
<dbReference type="SUPFAM" id="SSF48300">
    <property type="entry name" value="Ribosomal protein L7/12, oligomerisation (N-terminal) domain"/>
    <property type="match status" value="1"/>
</dbReference>
<sequence>MSITKDQIIEAVSAMSVMDVVELISAMEEKFGVSAAAAVAVAAGPVEAAEEKTEFDVILKAAGANKVAVIKAVRGATGLGLKEAKDLVESAPAALKEGISKDDAEALKKSLEEAGAEVEVK</sequence>
<feature type="chain" id="PRO_1000121450" description="Large ribosomal subunit protein bL12">
    <location>
        <begin position="1"/>
        <end position="121"/>
    </location>
</feature>
<comment type="function">
    <text evidence="1">Forms part of the ribosomal stalk which helps the ribosome interact with GTP-bound translation factors. Is thus essential for accurate translation.</text>
</comment>
<comment type="subunit">
    <text evidence="1">Homodimer. Part of the ribosomal stalk of the 50S ribosomal subunit. Forms a multimeric L10(L12)X complex, where L10 forms an elongated spine to which 2 to 4 L12 dimers bind in a sequential fashion. Binds GTP-bound translation factors.</text>
</comment>
<comment type="similarity">
    <text evidence="1">Belongs to the bacterial ribosomal protein bL12 family.</text>
</comment>
<gene>
    <name evidence="1" type="primary">rplL</name>
    <name type="ordered locus">KPK_5310</name>
</gene>
<organism>
    <name type="scientific">Klebsiella pneumoniae (strain 342)</name>
    <dbReference type="NCBI Taxonomy" id="507522"/>
    <lineage>
        <taxon>Bacteria</taxon>
        <taxon>Pseudomonadati</taxon>
        <taxon>Pseudomonadota</taxon>
        <taxon>Gammaproteobacteria</taxon>
        <taxon>Enterobacterales</taxon>
        <taxon>Enterobacteriaceae</taxon>
        <taxon>Klebsiella/Raoultella group</taxon>
        <taxon>Klebsiella</taxon>
        <taxon>Klebsiella pneumoniae complex</taxon>
    </lineage>
</organism>
<proteinExistence type="inferred from homology"/>
<name>RL7_KLEP3</name>
<reference key="1">
    <citation type="journal article" date="2008" name="PLoS Genet.">
        <title>Complete genome sequence of the N2-fixing broad host range endophyte Klebsiella pneumoniae 342 and virulence predictions verified in mice.</title>
        <authorList>
            <person name="Fouts D.E."/>
            <person name="Tyler H.L."/>
            <person name="DeBoy R.T."/>
            <person name="Daugherty S."/>
            <person name="Ren Q."/>
            <person name="Badger J.H."/>
            <person name="Durkin A.S."/>
            <person name="Huot H."/>
            <person name="Shrivastava S."/>
            <person name="Kothari S."/>
            <person name="Dodson R.J."/>
            <person name="Mohamoud Y."/>
            <person name="Khouri H."/>
            <person name="Roesch L.F.W."/>
            <person name="Krogfelt K.A."/>
            <person name="Struve C."/>
            <person name="Triplett E.W."/>
            <person name="Methe B.A."/>
        </authorList>
    </citation>
    <scope>NUCLEOTIDE SEQUENCE [LARGE SCALE GENOMIC DNA]</scope>
    <source>
        <strain>342</strain>
    </source>
</reference>
<keyword id="KW-0687">Ribonucleoprotein</keyword>
<keyword id="KW-0689">Ribosomal protein</keyword>
<protein>
    <recommendedName>
        <fullName evidence="1">Large ribosomal subunit protein bL12</fullName>
    </recommendedName>
    <alternativeName>
        <fullName evidence="2">50S ribosomal protein L7/L12</fullName>
    </alternativeName>
</protein>
<evidence type="ECO:0000255" key="1">
    <source>
        <dbReference type="HAMAP-Rule" id="MF_00368"/>
    </source>
</evidence>
<evidence type="ECO:0000305" key="2"/>